<protein>
    <recommendedName>
        <fullName evidence="1">DNA-directed RNA polymerase subunit omega</fullName>
        <shortName evidence="1">RNAP omega subunit</shortName>
        <ecNumber evidence="1">2.7.7.6</ecNumber>
    </recommendedName>
    <alternativeName>
        <fullName evidence="1">RNA polymerase omega subunit</fullName>
    </alternativeName>
    <alternativeName>
        <fullName evidence="1">Transcriptase subunit omega</fullName>
    </alternativeName>
</protein>
<comment type="function">
    <text evidence="1">Promotes RNA polymerase assembly. Latches the N- and C-terminal regions of the beta' subunit thereby facilitating its interaction with the beta and alpha subunits.</text>
</comment>
<comment type="catalytic activity">
    <reaction evidence="1">
        <text>RNA(n) + a ribonucleoside 5'-triphosphate = RNA(n+1) + diphosphate</text>
        <dbReference type="Rhea" id="RHEA:21248"/>
        <dbReference type="Rhea" id="RHEA-COMP:14527"/>
        <dbReference type="Rhea" id="RHEA-COMP:17342"/>
        <dbReference type="ChEBI" id="CHEBI:33019"/>
        <dbReference type="ChEBI" id="CHEBI:61557"/>
        <dbReference type="ChEBI" id="CHEBI:140395"/>
        <dbReference type="EC" id="2.7.7.6"/>
    </reaction>
</comment>
<comment type="subunit">
    <text evidence="1">The RNAP catalytic core consists of 2 alpha, 1 beta, 1 beta' and 1 omega subunit. When a sigma factor is associated with the core the holoenzyme is formed, which can initiate transcription.</text>
</comment>
<comment type="similarity">
    <text evidence="1">Belongs to the RNA polymerase subunit omega family.</text>
</comment>
<dbReference type="EC" id="2.7.7.6" evidence="1"/>
<dbReference type="EMBL" id="AP009179">
    <property type="protein sequence ID" value="BAF72693.1"/>
    <property type="molecule type" value="Genomic_DNA"/>
</dbReference>
<dbReference type="RefSeq" id="WP_012083503.1">
    <property type="nucleotide sequence ID" value="NC_009663.1"/>
</dbReference>
<dbReference type="SMR" id="A6QB34"/>
<dbReference type="STRING" id="387093.SUN_1746"/>
<dbReference type="KEGG" id="sun:SUN_1746"/>
<dbReference type="eggNOG" id="COG1758">
    <property type="taxonomic scope" value="Bacteria"/>
</dbReference>
<dbReference type="HOGENOM" id="CLU_125406_3_0_7"/>
<dbReference type="OrthoDB" id="5334728at2"/>
<dbReference type="Proteomes" id="UP000006378">
    <property type="component" value="Chromosome"/>
</dbReference>
<dbReference type="GO" id="GO:0000428">
    <property type="term" value="C:DNA-directed RNA polymerase complex"/>
    <property type="evidence" value="ECO:0007669"/>
    <property type="project" value="UniProtKB-KW"/>
</dbReference>
<dbReference type="GO" id="GO:0003677">
    <property type="term" value="F:DNA binding"/>
    <property type="evidence" value="ECO:0007669"/>
    <property type="project" value="UniProtKB-UniRule"/>
</dbReference>
<dbReference type="GO" id="GO:0003899">
    <property type="term" value="F:DNA-directed RNA polymerase activity"/>
    <property type="evidence" value="ECO:0007669"/>
    <property type="project" value="UniProtKB-UniRule"/>
</dbReference>
<dbReference type="GO" id="GO:0006351">
    <property type="term" value="P:DNA-templated transcription"/>
    <property type="evidence" value="ECO:0007669"/>
    <property type="project" value="UniProtKB-UniRule"/>
</dbReference>
<dbReference type="Gene3D" id="3.90.940.10">
    <property type="match status" value="1"/>
</dbReference>
<dbReference type="HAMAP" id="MF_00366">
    <property type="entry name" value="RNApol_bact_RpoZ"/>
    <property type="match status" value="1"/>
</dbReference>
<dbReference type="InterPro" id="IPR003716">
    <property type="entry name" value="DNA-dir_RNA_pol_omega"/>
</dbReference>
<dbReference type="InterPro" id="IPR006110">
    <property type="entry name" value="Pol_omega/Rpo6/RPB6"/>
</dbReference>
<dbReference type="InterPro" id="IPR036161">
    <property type="entry name" value="RPB6/omega-like_sf"/>
</dbReference>
<dbReference type="NCBIfam" id="NF001579">
    <property type="entry name" value="PRK00392.6-2"/>
    <property type="match status" value="1"/>
</dbReference>
<dbReference type="NCBIfam" id="TIGR00690">
    <property type="entry name" value="rpoZ"/>
    <property type="match status" value="1"/>
</dbReference>
<dbReference type="Pfam" id="PF01192">
    <property type="entry name" value="RNA_pol_Rpb6"/>
    <property type="match status" value="1"/>
</dbReference>
<dbReference type="SMART" id="SM01409">
    <property type="entry name" value="RNA_pol_Rpb6"/>
    <property type="match status" value="1"/>
</dbReference>
<dbReference type="SUPFAM" id="SSF63562">
    <property type="entry name" value="RPB6/omega subunit-like"/>
    <property type="match status" value="1"/>
</dbReference>
<sequence length="68" mass="7495">MRTEQLTAKAMEKVNFDKYLLANAVGKRAEKIANGAEVLLDYDTSGMKYTDIALREIAEGKITVSLEG</sequence>
<evidence type="ECO:0000255" key="1">
    <source>
        <dbReference type="HAMAP-Rule" id="MF_00366"/>
    </source>
</evidence>
<reference key="1">
    <citation type="journal article" date="2007" name="Proc. Natl. Acad. Sci. U.S.A.">
        <title>Deep-sea vent epsilon-proteobacterial genomes provide insights into emergence of pathogens.</title>
        <authorList>
            <person name="Nakagawa S."/>
            <person name="Takaki Y."/>
            <person name="Shimamura S."/>
            <person name="Reysenbach A.-L."/>
            <person name="Takai K."/>
            <person name="Horikoshi K."/>
        </authorList>
    </citation>
    <scope>NUCLEOTIDE SEQUENCE [LARGE SCALE GENOMIC DNA]</scope>
    <source>
        <strain>NBC37-1</strain>
    </source>
</reference>
<keyword id="KW-0240">DNA-directed RNA polymerase</keyword>
<keyword id="KW-0548">Nucleotidyltransferase</keyword>
<keyword id="KW-0804">Transcription</keyword>
<keyword id="KW-0808">Transferase</keyword>
<gene>
    <name evidence="1" type="primary">rpoZ</name>
    <name type="ordered locus">SUN_1746</name>
</gene>
<feature type="chain" id="PRO_1000079653" description="DNA-directed RNA polymerase subunit omega">
    <location>
        <begin position="1"/>
        <end position="68"/>
    </location>
</feature>
<proteinExistence type="inferred from homology"/>
<organism>
    <name type="scientific">Sulfurovum sp. (strain NBC37-1)</name>
    <dbReference type="NCBI Taxonomy" id="387093"/>
    <lineage>
        <taxon>Bacteria</taxon>
        <taxon>Pseudomonadati</taxon>
        <taxon>Campylobacterota</taxon>
        <taxon>Epsilonproteobacteria</taxon>
        <taxon>Campylobacterales</taxon>
        <taxon>Sulfurovaceae</taxon>
        <taxon>Sulfurovum</taxon>
    </lineage>
</organism>
<name>RPOZ_SULNB</name>
<accession>A6QB34</accession>